<accession>Q32IN4</accession>
<proteinExistence type="inferred from homology"/>
<keyword id="KW-0067">ATP-binding</keyword>
<keyword id="KW-0997">Cell inner membrane</keyword>
<keyword id="KW-1003">Cell membrane</keyword>
<keyword id="KW-0406">Ion transport</keyword>
<keyword id="KW-0472">Membrane</keyword>
<keyword id="KW-0547">Nucleotide-binding</keyword>
<keyword id="KW-0630">Potassium</keyword>
<keyword id="KW-0633">Potassium transport</keyword>
<keyword id="KW-1185">Reference proteome</keyword>
<keyword id="KW-0812">Transmembrane</keyword>
<keyword id="KW-1133">Transmembrane helix</keyword>
<keyword id="KW-0813">Transport</keyword>
<comment type="function">
    <text evidence="1">Part of the high-affinity ATP-driven potassium transport (or Kdp) system, which catalyzes the hydrolysis of ATP coupled with the electrogenic transport of potassium into the cytoplasm. This subunit acts as a catalytic chaperone that increases the ATP-binding affinity of the ATP-hydrolyzing subunit KdpB by the formation of a transient KdpB/KdpC/ATP ternary complex.</text>
</comment>
<comment type="subunit">
    <text evidence="1">The system is composed of three essential subunits: KdpA, KdpB and KdpC.</text>
</comment>
<comment type="subcellular location">
    <subcellularLocation>
        <location evidence="1">Cell inner membrane</location>
        <topology evidence="1">Single-pass membrane protein</topology>
    </subcellularLocation>
</comment>
<comment type="similarity">
    <text evidence="1">Belongs to the KdpC family.</text>
</comment>
<evidence type="ECO:0000255" key="1">
    <source>
        <dbReference type="HAMAP-Rule" id="MF_00276"/>
    </source>
</evidence>
<gene>
    <name evidence="1" type="primary">kdpC</name>
    <name type="ordered locus">SDY_0631</name>
</gene>
<name>KDPC_SHIDS</name>
<sequence length="190" mass="20363">MSGLRPAISTFIFLLLITGGVYPLLTTVLGQWWFPWQANGSLIREGDTVRGSALIGQNFTDNGYFQGRPSATAEMPYNPQASGGSNLAVSNPELDKQIAARVAALRAANPDTSTSVPAELVTASASGLDNNITPQAAAWQIPRVAKARNLSVEQLTQLIAKYSQQPLVKYIGQPVVNIVELNLALDKLDE</sequence>
<protein>
    <recommendedName>
        <fullName evidence="1">Potassium-transporting ATPase KdpC subunit</fullName>
    </recommendedName>
    <alternativeName>
        <fullName evidence="1">ATP phosphohydrolase [potassium-transporting] C chain</fullName>
    </alternativeName>
    <alternativeName>
        <fullName evidence="1">Potassium-binding and translocating subunit C</fullName>
    </alternativeName>
    <alternativeName>
        <fullName evidence="1">Potassium-translocating ATPase C chain</fullName>
    </alternativeName>
</protein>
<dbReference type="EMBL" id="CP000034">
    <property type="protein sequence ID" value="ABB60823.1"/>
    <property type="molecule type" value="Genomic_DNA"/>
</dbReference>
<dbReference type="RefSeq" id="WP_005019883.1">
    <property type="nucleotide sequence ID" value="NC_007606.1"/>
</dbReference>
<dbReference type="RefSeq" id="YP_402312.1">
    <property type="nucleotide sequence ID" value="NC_007606.1"/>
</dbReference>
<dbReference type="SMR" id="Q32IN4"/>
<dbReference type="EnsemblBacteria" id="ABB60823">
    <property type="protein sequence ID" value="ABB60823"/>
    <property type="gene ID" value="SDY_0631"/>
</dbReference>
<dbReference type="KEGG" id="sdy:SDY_0631"/>
<dbReference type="PATRIC" id="fig|300267.13.peg.735"/>
<dbReference type="HOGENOM" id="CLU_077094_2_0_6"/>
<dbReference type="Proteomes" id="UP000002716">
    <property type="component" value="Chromosome"/>
</dbReference>
<dbReference type="GO" id="GO:0005886">
    <property type="term" value="C:plasma membrane"/>
    <property type="evidence" value="ECO:0007669"/>
    <property type="project" value="UniProtKB-SubCell"/>
</dbReference>
<dbReference type="GO" id="GO:0005524">
    <property type="term" value="F:ATP binding"/>
    <property type="evidence" value="ECO:0007669"/>
    <property type="project" value="UniProtKB-UniRule"/>
</dbReference>
<dbReference type="GO" id="GO:0008556">
    <property type="term" value="F:P-type potassium transmembrane transporter activity"/>
    <property type="evidence" value="ECO:0007669"/>
    <property type="project" value="InterPro"/>
</dbReference>
<dbReference type="HAMAP" id="MF_00276">
    <property type="entry name" value="KdpC"/>
    <property type="match status" value="1"/>
</dbReference>
<dbReference type="InterPro" id="IPR003820">
    <property type="entry name" value="KdpC"/>
</dbReference>
<dbReference type="NCBIfam" id="TIGR00681">
    <property type="entry name" value="kdpC"/>
    <property type="match status" value="1"/>
</dbReference>
<dbReference type="NCBIfam" id="NF001454">
    <property type="entry name" value="PRK00315.1"/>
    <property type="match status" value="1"/>
</dbReference>
<dbReference type="PANTHER" id="PTHR30042">
    <property type="entry name" value="POTASSIUM-TRANSPORTING ATPASE C CHAIN"/>
    <property type="match status" value="1"/>
</dbReference>
<dbReference type="PANTHER" id="PTHR30042:SF2">
    <property type="entry name" value="POTASSIUM-TRANSPORTING ATPASE KDPC SUBUNIT"/>
    <property type="match status" value="1"/>
</dbReference>
<dbReference type="Pfam" id="PF02669">
    <property type="entry name" value="KdpC"/>
    <property type="match status" value="1"/>
</dbReference>
<dbReference type="PIRSF" id="PIRSF001296">
    <property type="entry name" value="K_ATPase_KdpC"/>
    <property type="match status" value="1"/>
</dbReference>
<reference key="1">
    <citation type="journal article" date="2005" name="Nucleic Acids Res.">
        <title>Genome dynamics and diversity of Shigella species, the etiologic agents of bacillary dysentery.</title>
        <authorList>
            <person name="Yang F."/>
            <person name="Yang J."/>
            <person name="Zhang X."/>
            <person name="Chen L."/>
            <person name="Jiang Y."/>
            <person name="Yan Y."/>
            <person name="Tang X."/>
            <person name="Wang J."/>
            <person name="Xiong Z."/>
            <person name="Dong J."/>
            <person name="Xue Y."/>
            <person name="Zhu Y."/>
            <person name="Xu X."/>
            <person name="Sun L."/>
            <person name="Chen S."/>
            <person name="Nie H."/>
            <person name="Peng J."/>
            <person name="Xu J."/>
            <person name="Wang Y."/>
            <person name="Yuan Z."/>
            <person name="Wen Y."/>
            <person name="Yao Z."/>
            <person name="Shen Y."/>
            <person name="Qiang B."/>
            <person name="Hou Y."/>
            <person name="Yu J."/>
            <person name="Jin Q."/>
        </authorList>
    </citation>
    <scope>NUCLEOTIDE SEQUENCE [LARGE SCALE GENOMIC DNA]</scope>
    <source>
        <strain>Sd197</strain>
    </source>
</reference>
<feature type="chain" id="PRO_1000022314" description="Potassium-transporting ATPase KdpC subunit">
    <location>
        <begin position="1"/>
        <end position="190"/>
    </location>
</feature>
<feature type="transmembrane region" description="Helical" evidence="1">
    <location>
        <begin position="10"/>
        <end position="30"/>
    </location>
</feature>
<organism>
    <name type="scientific">Shigella dysenteriae serotype 1 (strain Sd197)</name>
    <dbReference type="NCBI Taxonomy" id="300267"/>
    <lineage>
        <taxon>Bacteria</taxon>
        <taxon>Pseudomonadati</taxon>
        <taxon>Pseudomonadota</taxon>
        <taxon>Gammaproteobacteria</taxon>
        <taxon>Enterobacterales</taxon>
        <taxon>Enterobacteriaceae</taxon>
        <taxon>Shigella</taxon>
    </lineage>
</organism>